<organism>
    <name type="scientific">Schizosaccharomyces pombe (strain 972 / ATCC 24843)</name>
    <name type="common">Fission yeast</name>
    <dbReference type="NCBI Taxonomy" id="284812"/>
    <lineage>
        <taxon>Eukaryota</taxon>
        <taxon>Fungi</taxon>
        <taxon>Dikarya</taxon>
        <taxon>Ascomycota</taxon>
        <taxon>Taphrinomycotina</taxon>
        <taxon>Schizosaccharomycetes</taxon>
        <taxon>Schizosaccharomycetales</taxon>
        <taxon>Schizosaccharomycetaceae</taxon>
        <taxon>Schizosaccharomyces</taxon>
    </lineage>
</organism>
<reference key="1">
    <citation type="journal article" date="2002" name="Nature">
        <title>The genome sequence of Schizosaccharomyces pombe.</title>
        <authorList>
            <person name="Wood V."/>
            <person name="Gwilliam R."/>
            <person name="Rajandream M.A."/>
            <person name="Lyne M.H."/>
            <person name="Lyne R."/>
            <person name="Stewart A."/>
            <person name="Sgouros J.G."/>
            <person name="Peat N."/>
            <person name="Hayles J."/>
            <person name="Baker S.G."/>
            <person name="Basham D."/>
            <person name="Bowman S."/>
            <person name="Brooks K."/>
            <person name="Brown D."/>
            <person name="Brown S."/>
            <person name="Chillingworth T."/>
            <person name="Churcher C.M."/>
            <person name="Collins M."/>
            <person name="Connor R."/>
            <person name="Cronin A."/>
            <person name="Davis P."/>
            <person name="Feltwell T."/>
            <person name="Fraser A."/>
            <person name="Gentles S."/>
            <person name="Goble A."/>
            <person name="Hamlin N."/>
            <person name="Harris D.E."/>
            <person name="Hidalgo J."/>
            <person name="Hodgson G."/>
            <person name="Holroyd S."/>
            <person name="Hornsby T."/>
            <person name="Howarth S."/>
            <person name="Huckle E.J."/>
            <person name="Hunt S."/>
            <person name="Jagels K."/>
            <person name="James K.D."/>
            <person name="Jones L."/>
            <person name="Jones M."/>
            <person name="Leather S."/>
            <person name="McDonald S."/>
            <person name="McLean J."/>
            <person name="Mooney P."/>
            <person name="Moule S."/>
            <person name="Mungall K.L."/>
            <person name="Murphy L.D."/>
            <person name="Niblett D."/>
            <person name="Odell C."/>
            <person name="Oliver K."/>
            <person name="O'Neil S."/>
            <person name="Pearson D."/>
            <person name="Quail M.A."/>
            <person name="Rabbinowitsch E."/>
            <person name="Rutherford K.M."/>
            <person name="Rutter S."/>
            <person name="Saunders D."/>
            <person name="Seeger K."/>
            <person name="Sharp S."/>
            <person name="Skelton J."/>
            <person name="Simmonds M.N."/>
            <person name="Squares R."/>
            <person name="Squares S."/>
            <person name="Stevens K."/>
            <person name="Taylor K."/>
            <person name="Taylor R.G."/>
            <person name="Tivey A."/>
            <person name="Walsh S.V."/>
            <person name="Warren T."/>
            <person name="Whitehead S."/>
            <person name="Woodward J.R."/>
            <person name="Volckaert G."/>
            <person name="Aert R."/>
            <person name="Robben J."/>
            <person name="Grymonprez B."/>
            <person name="Weltjens I."/>
            <person name="Vanstreels E."/>
            <person name="Rieger M."/>
            <person name="Schaefer M."/>
            <person name="Mueller-Auer S."/>
            <person name="Gabel C."/>
            <person name="Fuchs M."/>
            <person name="Duesterhoeft A."/>
            <person name="Fritzc C."/>
            <person name="Holzer E."/>
            <person name="Moestl D."/>
            <person name="Hilbert H."/>
            <person name="Borzym K."/>
            <person name="Langer I."/>
            <person name="Beck A."/>
            <person name="Lehrach H."/>
            <person name="Reinhardt R."/>
            <person name="Pohl T.M."/>
            <person name="Eger P."/>
            <person name="Zimmermann W."/>
            <person name="Wedler H."/>
            <person name="Wambutt R."/>
            <person name="Purnelle B."/>
            <person name="Goffeau A."/>
            <person name="Cadieu E."/>
            <person name="Dreano S."/>
            <person name="Gloux S."/>
            <person name="Lelaure V."/>
            <person name="Mottier S."/>
            <person name="Galibert F."/>
            <person name="Aves S.J."/>
            <person name="Xiang Z."/>
            <person name="Hunt C."/>
            <person name="Moore K."/>
            <person name="Hurst S.M."/>
            <person name="Lucas M."/>
            <person name="Rochet M."/>
            <person name="Gaillardin C."/>
            <person name="Tallada V.A."/>
            <person name="Garzon A."/>
            <person name="Thode G."/>
            <person name="Daga R.R."/>
            <person name="Cruzado L."/>
            <person name="Jimenez J."/>
            <person name="Sanchez M."/>
            <person name="del Rey F."/>
            <person name="Benito J."/>
            <person name="Dominguez A."/>
            <person name="Revuelta J.L."/>
            <person name="Moreno S."/>
            <person name="Armstrong J."/>
            <person name="Forsburg S.L."/>
            <person name="Cerutti L."/>
            <person name="Lowe T."/>
            <person name="McCombie W.R."/>
            <person name="Paulsen I."/>
            <person name="Potashkin J."/>
            <person name="Shpakovski G.V."/>
            <person name="Ussery D."/>
            <person name="Barrell B.G."/>
            <person name="Nurse P."/>
        </authorList>
    </citation>
    <scope>NUCLEOTIDE SEQUENCE [LARGE SCALE GENOMIC DNA]</scope>
    <source>
        <strain>972 / ATCC 24843</strain>
    </source>
</reference>
<sequence length="373" mass="42497">MFRGKPNSIETLILQATDEKNTKEKWDVIMDACDQLSSTSGDVGRNSIKFLNKRLDTANANIQLLALTLTDAIVKNCKTSIVREISSRTFTDSLLKIASDSTTHNRVRSRIAVLVNEWAEIMKKDPNMSLMQDICEKIRKLDIVDLRAPKKPEKEAMNELELKREEEELQYALALSLSESTAQSNKVENPQSTKDEPLQKTNQRQESNLATSPASTVSRVRALYDFAATEQGELSFKKGDIILVLESVYKDWWKGSCKNAVGIFPVNYVQRVVEPTIEQQRQSAHMEQQVFDALPQIDELLDTLSTTSPDAADDDALQGKYHAMIALRPKLVRLIEKYASQKEELMDLNERLLVARRDYEKLYEQSMSEMRNF</sequence>
<feature type="chain" id="PRO_0000292503" description="Class E vacuolar protein-sorting machinery protein hse1">
    <location>
        <begin position="1"/>
        <end position="373"/>
    </location>
</feature>
<feature type="domain" description="VHS" evidence="4">
    <location>
        <begin position="16"/>
        <end position="146"/>
    </location>
</feature>
<feature type="domain" description="UIM" evidence="3">
    <location>
        <begin position="164"/>
        <end position="183"/>
    </location>
</feature>
<feature type="domain" description="SH3" evidence="2">
    <location>
        <begin position="215"/>
        <end position="274"/>
    </location>
</feature>
<feature type="region of interest" description="Disordered" evidence="5">
    <location>
        <begin position="180"/>
        <end position="213"/>
    </location>
</feature>
<feature type="compositionally biased region" description="Polar residues" evidence="5">
    <location>
        <begin position="180"/>
        <end position="192"/>
    </location>
</feature>
<feature type="compositionally biased region" description="Polar residues" evidence="5">
    <location>
        <begin position="199"/>
        <end position="213"/>
    </location>
</feature>
<name>HSE1_SCHPO</name>
<keyword id="KW-0967">Endosome</keyword>
<keyword id="KW-0472">Membrane</keyword>
<keyword id="KW-0653">Protein transport</keyword>
<keyword id="KW-1185">Reference proteome</keyword>
<keyword id="KW-0728">SH3 domain</keyword>
<keyword id="KW-0813">Transport</keyword>
<evidence type="ECO:0000250" key="1"/>
<evidence type="ECO:0000255" key="2">
    <source>
        <dbReference type="PROSITE-ProRule" id="PRU00192"/>
    </source>
</evidence>
<evidence type="ECO:0000255" key="3">
    <source>
        <dbReference type="PROSITE-ProRule" id="PRU00213"/>
    </source>
</evidence>
<evidence type="ECO:0000255" key="4">
    <source>
        <dbReference type="PROSITE-ProRule" id="PRU00218"/>
    </source>
</evidence>
<evidence type="ECO:0000256" key="5">
    <source>
        <dbReference type="SAM" id="MobiDB-lite"/>
    </source>
</evidence>
<evidence type="ECO:0000305" key="6"/>
<accession>O74749</accession>
<dbReference type="EMBL" id="CU329671">
    <property type="protein sequence ID" value="CAA21302.1"/>
    <property type="molecule type" value="Genomic_DNA"/>
</dbReference>
<dbReference type="PIR" id="T39655">
    <property type="entry name" value="T39655"/>
</dbReference>
<dbReference type="RefSeq" id="NP_595425.1">
    <property type="nucleotide sequence ID" value="NM_001021333.2"/>
</dbReference>
<dbReference type="SMR" id="O74749"/>
<dbReference type="BioGRID" id="276593">
    <property type="interactions" value="3"/>
</dbReference>
<dbReference type="FunCoup" id="O74749">
    <property type="interactions" value="242"/>
</dbReference>
<dbReference type="STRING" id="284812.O74749"/>
<dbReference type="iPTMnet" id="O74749"/>
<dbReference type="PaxDb" id="4896-SPBC1734.08.1"/>
<dbReference type="EnsemblFungi" id="SPBC1734.08.1">
    <property type="protein sequence ID" value="SPBC1734.08.1:pep"/>
    <property type="gene ID" value="SPBC1734.08"/>
</dbReference>
<dbReference type="GeneID" id="2540055"/>
<dbReference type="KEGG" id="spo:2540055"/>
<dbReference type="PomBase" id="SPBC1734.08">
    <property type="gene designation" value="hse1"/>
</dbReference>
<dbReference type="VEuPathDB" id="FungiDB:SPBC1734.08"/>
<dbReference type="eggNOG" id="KOG2199">
    <property type="taxonomic scope" value="Eukaryota"/>
</dbReference>
<dbReference type="HOGENOM" id="CLU_010104_2_1_1"/>
<dbReference type="InParanoid" id="O74749"/>
<dbReference type="OMA" id="QVYRDWW"/>
<dbReference type="PhylomeDB" id="O74749"/>
<dbReference type="Reactome" id="R-SPO-5689901">
    <property type="pathway name" value="Metalloprotease DUBs"/>
</dbReference>
<dbReference type="Reactome" id="R-SPO-9013420">
    <property type="pathway name" value="RHOU GTPase cycle"/>
</dbReference>
<dbReference type="PRO" id="PR:O74749"/>
<dbReference type="Proteomes" id="UP000002485">
    <property type="component" value="Chromosome II"/>
</dbReference>
<dbReference type="GO" id="GO:0005737">
    <property type="term" value="C:cytoplasm"/>
    <property type="evidence" value="ECO:0007005"/>
    <property type="project" value="PomBase"/>
</dbReference>
<dbReference type="GO" id="GO:0005829">
    <property type="term" value="C:cytosol"/>
    <property type="evidence" value="ECO:0007005"/>
    <property type="project" value="PomBase"/>
</dbReference>
<dbReference type="GO" id="GO:0010008">
    <property type="term" value="C:endosome membrane"/>
    <property type="evidence" value="ECO:0007669"/>
    <property type="project" value="UniProtKB-SubCell"/>
</dbReference>
<dbReference type="GO" id="GO:0033565">
    <property type="term" value="C:ESCRT-0 complex"/>
    <property type="evidence" value="ECO:0000353"/>
    <property type="project" value="PomBase"/>
</dbReference>
<dbReference type="GO" id="GO:0000329">
    <property type="term" value="C:fungal-type vacuole membrane"/>
    <property type="evidence" value="ECO:0000314"/>
    <property type="project" value="PomBase"/>
</dbReference>
<dbReference type="GO" id="GO:0005794">
    <property type="term" value="C:Golgi apparatus"/>
    <property type="evidence" value="ECO:0007005"/>
    <property type="project" value="PomBase"/>
</dbReference>
<dbReference type="GO" id="GO:0005634">
    <property type="term" value="C:nucleus"/>
    <property type="evidence" value="ECO:0007005"/>
    <property type="project" value="PomBase"/>
</dbReference>
<dbReference type="GO" id="GO:0005628">
    <property type="term" value="C:prospore membrane"/>
    <property type="evidence" value="ECO:0000314"/>
    <property type="project" value="PomBase"/>
</dbReference>
<dbReference type="GO" id="GO:0035091">
    <property type="term" value="F:phosphatidylinositol binding"/>
    <property type="evidence" value="ECO:0007669"/>
    <property type="project" value="InterPro"/>
</dbReference>
<dbReference type="GO" id="GO:0043130">
    <property type="term" value="F:ubiquitin binding"/>
    <property type="evidence" value="ECO:0007669"/>
    <property type="project" value="InterPro"/>
</dbReference>
<dbReference type="GO" id="GO:0031321">
    <property type="term" value="P:ascospore-type prospore assembly"/>
    <property type="evidence" value="ECO:0000316"/>
    <property type="project" value="PomBase"/>
</dbReference>
<dbReference type="GO" id="GO:0045324">
    <property type="term" value="P:late endosome to vacuole transport"/>
    <property type="evidence" value="ECO:0000315"/>
    <property type="project" value="PomBase"/>
</dbReference>
<dbReference type="GO" id="GO:0043328">
    <property type="term" value="P:protein transport to vacuole involved in ubiquitin-dependent protein catabolic process via the multivesicular body sorting pathway"/>
    <property type="evidence" value="ECO:0000315"/>
    <property type="project" value="PomBase"/>
</dbReference>
<dbReference type="CDD" id="cd21386">
    <property type="entry name" value="GAT_Hse1"/>
    <property type="match status" value="1"/>
</dbReference>
<dbReference type="CDD" id="cd11805">
    <property type="entry name" value="SH3_GRB2_like_C"/>
    <property type="match status" value="1"/>
</dbReference>
<dbReference type="CDD" id="cd16978">
    <property type="entry name" value="VHS_HSE1"/>
    <property type="match status" value="1"/>
</dbReference>
<dbReference type="FunFam" id="1.25.40.90:FF:000009">
    <property type="entry name" value="Putative signal transducing adapter molecule 1"/>
    <property type="match status" value="1"/>
</dbReference>
<dbReference type="FunFam" id="2.30.30.40:FF:000072">
    <property type="entry name" value="Unconventional Myosin IB"/>
    <property type="match status" value="1"/>
</dbReference>
<dbReference type="Gene3D" id="1.20.5.1940">
    <property type="match status" value="1"/>
</dbReference>
<dbReference type="Gene3D" id="1.25.40.90">
    <property type="match status" value="1"/>
</dbReference>
<dbReference type="Gene3D" id="2.30.30.40">
    <property type="entry name" value="SH3 Domains"/>
    <property type="match status" value="1"/>
</dbReference>
<dbReference type="InterPro" id="IPR008942">
    <property type="entry name" value="ENTH_VHS"/>
</dbReference>
<dbReference type="InterPro" id="IPR004152">
    <property type="entry name" value="GAT_dom"/>
</dbReference>
<dbReference type="InterPro" id="IPR036028">
    <property type="entry name" value="SH3-like_dom_sf"/>
</dbReference>
<dbReference type="InterPro" id="IPR001452">
    <property type="entry name" value="SH3_domain"/>
</dbReference>
<dbReference type="InterPro" id="IPR050670">
    <property type="entry name" value="STAM"/>
</dbReference>
<dbReference type="InterPro" id="IPR003903">
    <property type="entry name" value="UIM_dom"/>
</dbReference>
<dbReference type="InterPro" id="IPR002014">
    <property type="entry name" value="VHS_dom"/>
</dbReference>
<dbReference type="PANTHER" id="PTHR45929">
    <property type="entry name" value="JAK PATHWAY SIGNAL TRANSDUCTION ADAPTOR MOLECULE"/>
    <property type="match status" value="1"/>
</dbReference>
<dbReference type="PANTHER" id="PTHR45929:SF3">
    <property type="entry name" value="JAK PATHWAY SIGNAL TRANSDUCTION ADAPTOR MOLECULE"/>
    <property type="match status" value="1"/>
</dbReference>
<dbReference type="Pfam" id="PF03127">
    <property type="entry name" value="GAT"/>
    <property type="match status" value="1"/>
</dbReference>
<dbReference type="Pfam" id="PF00018">
    <property type="entry name" value="SH3_1"/>
    <property type="match status" value="1"/>
</dbReference>
<dbReference type="Pfam" id="PF00790">
    <property type="entry name" value="VHS"/>
    <property type="match status" value="1"/>
</dbReference>
<dbReference type="PRINTS" id="PR00499">
    <property type="entry name" value="P67PHOX"/>
</dbReference>
<dbReference type="PRINTS" id="PR00452">
    <property type="entry name" value="SH3DOMAIN"/>
</dbReference>
<dbReference type="SMART" id="SM00326">
    <property type="entry name" value="SH3"/>
    <property type="match status" value="1"/>
</dbReference>
<dbReference type="SMART" id="SM00288">
    <property type="entry name" value="VHS"/>
    <property type="match status" value="1"/>
</dbReference>
<dbReference type="SUPFAM" id="SSF48464">
    <property type="entry name" value="ENTH/VHS domain"/>
    <property type="match status" value="1"/>
</dbReference>
<dbReference type="SUPFAM" id="SSF89009">
    <property type="entry name" value="GAT-like domain"/>
    <property type="match status" value="1"/>
</dbReference>
<dbReference type="SUPFAM" id="SSF50044">
    <property type="entry name" value="SH3-domain"/>
    <property type="match status" value="1"/>
</dbReference>
<dbReference type="PROSITE" id="PS50002">
    <property type="entry name" value="SH3"/>
    <property type="match status" value="1"/>
</dbReference>
<dbReference type="PROSITE" id="PS50330">
    <property type="entry name" value="UIM"/>
    <property type="match status" value="1"/>
</dbReference>
<dbReference type="PROSITE" id="PS50179">
    <property type="entry name" value="VHS"/>
    <property type="match status" value="1"/>
</dbReference>
<protein>
    <recommendedName>
        <fullName>Class E vacuolar protein-sorting machinery protein hse1</fullName>
    </recommendedName>
</protein>
<comment type="function">
    <text evidence="1">Component of the ESCRT-0 complex which is the sorting receptor for ubiquitinated cargo proteins at the multivesicular body (MVB).</text>
</comment>
<comment type="subunit">
    <text evidence="1">Component of the ESCRT-0 complex composed of hse1 and sst4.</text>
</comment>
<comment type="subcellular location">
    <subcellularLocation>
        <location evidence="1">Endosome membrane</location>
        <topology evidence="1">Peripheral membrane protein</topology>
        <orientation evidence="1">Cytoplasmic side</orientation>
    </subcellularLocation>
</comment>
<comment type="similarity">
    <text evidence="6">Belongs to the STAM family.</text>
</comment>
<gene>
    <name type="primary">hse1</name>
    <name type="ORF">SPBC1734.08</name>
</gene>
<proteinExistence type="inferred from homology"/>